<protein>
    <recommendedName>
        <fullName evidence="1">ATP synthase subunit a, chloroplastic</fullName>
    </recommendedName>
    <alternativeName>
        <fullName evidence="1">ATP synthase F0 sector subunit a</fullName>
    </alternativeName>
    <alternativeName>
        <fullName evidence="1">F-ATPase subunit IV</fullName>
    </alternativeName>
</protein>
<reference key="1">
    <citation type="journal article" date="2003" name="DNA Res.">
        <title>Complete nucleotide sequence of the chloroplast genome from a leptosporangiate fern, Adiantum capillus-veneris L.</title>
        <authorList>
            <person name="Wolf P.G."/>
            <person name="Rowe C.A."/>
            <person name="Sinclair R.B."/>
            <person name="Hasebe M."/>
        </authorList>
    </citation>
    <scope>NUCLEOTIDE SEQUENCE [LARGE SCALE GENOMIC DNA]</scope>
</reference>
<reference key="2">
    <citation type="journal article" date="2004" name="Gene">
        <title>High levels of RNA editing in a vascular plant chloroplast genome: analysis of transcripts from the fern Adiantum capillus-veneris.</title>
        <authorList>
            <person name="Wolf P.G."/>
            <person name="Rowe C.A."/>
            <person name="Hasebe M."/>
        </authorList>
    </citation>
    <scope>NUCLEOTIDE SEQUENCE [GENOMIC DNA]</scope>
    <scope>RNA EDITING</scope>
    <source>
        <tissue>Frond</tissue>
    </source>
</reference>
<organism>
    <name type="scientific">Adiantum capillus-veneris</name>
    <name type="common">Maidenhair fern</name>
    <dbReference type="NCBI Taxonomy" id="13818"/>
    <lineage>
        <taxon>Eukaryota</taxon>
        <taxon>Viridiplantae</taxon>
        <taxon>Streptophyta</taxon>
        <taxon>Embryophyta</taxon>
        <taxon>Tracheophyta</taxon>
        <taxon>Polypodiopsida</taxon>
        <taxon>Polypodiidae</taxon>
        <taxon>Polypodiales</taxon>
        <taxon>Pteridineae</taxon>
        <taxon>Pteridaceae</taxon>
        <taxon>Vittarioideae</taxon>
        <taxon>Adiantum</taxon>
    </lineage>
</organism>
<comment type="function">
    <text evidence="1">Key component of the proton channel; it plays a direct role in the translocation of protons across the membrane.</text>
</comment>
<comment type="subunit">
    <text evidence="1">F-type ATPases have 2 components, CF(1) - the catalytic core - and CF(0) - the membrane proton channel. CF(1) has five subunits: alpha(3), beta(3), gamma(1), delta(1), epsilon(1). CF(0) has four main subunits: a, b, b' and c.</text>
</comment>
<comment type="subcellular location">
    <subcellularLocation>
        <location evidence="1">Plastid</location>
        <location evidence="1">Chloroplast thylakoid membrane</location>
        <topology evidence="1">Multi-pass membrane protein</topology>
    </subcellularLocation>
</comment>
<comment type="RNA editing">
    <location>
        <position position="14" evidence="2"/>
    </location>
    <location>
        <position position="24" evidence="2"/>
    </location>
    <location>
        <position position="78" evidence="2"/>
    </location>
    <location>
        <position position="82" evidence="2"/>
    </location>
    <location>
        <position position="104" evidence="2"/>
    </location>
    <location>
        <position position="149" evidence="2"/>
    </location>
    <location>
        <position position="162" evidence="2"/>
    </location>
    <location>
        <position position="181" evidence="2"/>
    </location>
    <location>
        <position position="205" evidence="2"/>
    </location>
    <location>
        <position position="217" evidence="2"/>
    </location>
    <text>The nonsense codon at position 24 is modified to a sense codon.</text>
</comment>
<comment type="similarity">
    <text evidence="1">Belongs to the ATPase A chain family.</text>
</comment>
<proteinExistence type="evidence at transcript level"/>
<accession>Q85FN1</accession>
<evidence type="ECO:0000255" key="1">
    <source>
        <dbReference type="HAMAP-Rule" id="MF_01393"/>
    </source>
</evidence>
<evidence type="ECO:0000269" key="2">
    <source>
    </source>
</evidence>
<dbReference type="EMBL" id="AY178864">
    <property type="protein sequence ID" value="AAP29380.2"/>
    <property type="molecule type" value="Genomic_DNA"/>
</dbReference>
<dbReference type="RefSeq" id="NP_848048.1">
    <property type="nucleotide sequence ID" value="NC_004766.1"/>
</dbReference>
<dbReference type="SMR" id="Q85FN1"/>
<dbReference type="GeneID" id="807428"/>
<dbReference type="GO" id="GO:0009535">
    <property type="term" value="C:chloroplast thylakoid membrane"/>
    <property type="evidence" value="ECO:0007669"/>
    <property type="project" value="UniProtKB-SubCell"/>
</dbReference>
<dbReference type="GO" id="GO:0005886">
    <property type="term" value="C:plasma membrane"/>
    <property type="evidence" value="ECO:0007669"/>
    <property type="project" value="UniProtKB-UniRule"/>
</dbReference>
<dbReference type="GO" id="GO:0045259">
    <property type="term" value="C:proton-transporting ATP synthase complex"/>
    <property type="evidence" value="ECO:0007669"/>
    <property type="project" value="UniProtKB-KW"/>
</dbReference>
<dbReference type="GO" id="GO:0046933">
    <property type="term" value="F:proton-transporting ATP synthase activity, rotational mechanism"/>
    <property type="evidence" value="ECO:0007669"/>
    <property type="project" value="UniProtKB-UniRule"/>
</dbReference>
<dbReference type="CDD" id="cd00310">
    <property type="entry name" value="ATP-synt_Fo_a_6"/>
    <property type="match status" value="1"/>
</dbReference>
<dbReference type="FunFam" id="1.20.120.220:FF:000001">
    <property type="entry name" value="ATP synthase subunit a, chloroplastic"/>
    <property type="match status" value="1"/>
</dbReference>
<dbReference type="Gene3D" id="1.20.120.220">
    <property type="entry name" value="ATP synthase, F0 complex, subunit A"/>
    <property type="match status" value="1"/>
</dbReference>
<dbReference type="HAMAP" id="MF_01393">
    <property type="entry name" value="ATP_synth_a_bact"/>
    <property type="match status" value="1"/>
</dbReference>
<dbReference type="InterPro" id="IPR045082">
    <property type="entry name" value="ATP_syn_F0_a_bact/chloroplast"/>
</dbReference>
<dbReference type="InterPro" id="IPR000568">
    <property type="entry name" value="ATP_synth_F0_asu"/>
</dbReference>
<dbReference type="InterPro" id="IPR023011">
    <property type="entry name" value="ATP_synth_F0_asu_AS"/>
</dbReference>
<dbReference type="InterPro" id="IPR035908">
    <property type="entry name" value="F0_ATP_A_sf"/>
</dbReference>
<dbReference type="NCBIfam" id="TIGR01131">
    <property type="entry name" value="ATP_synt_6_or_A"/>
    <property type="match status" value="1"/>
</dbReference>
<dbReference type="PANTHER" id="PTHR42823">
    <property type="entry name" value="ATP SYNTHASE SUBUNIT A, CHLOROPLASTIC"/>
    <property type="match status" value="1"/>
</dbReference>
<dbReference type="PANTHER" id="PTHR42823:SF3">
    <property type="entry name" value="ATP SYNTHASE SUBUNIT A, CHLOROPLASTIC"/>
    <property type="match status" value="1"/>
</dbReference>
<dbReference type="Pfam" id="PF00119">
    <property type="entry name" value="ATP-synt_A"/>
    <property type="match status" value="1"/>
</dbReference>
<dbReference type="PRINTS" id="PR00123">
    <property type="entry name" value="ATPASEA"/>
</dbReference>
<dbReference type="SUPFAM" id="SSF81336">
    <property type="entry name" value="F1F0 ATP synthase subunit A"/>
    <property type="match status" value="1"/>
</dbReference>
<dbReference type="PROSITE" id="PS00449">
    <property type="entry name" value="ATPASE_A"/>
    <property type="match status" value="1"/>
</dbReference>
<geneLocation type="chloroplast"/>
<feature type="chain" id="PRO_0000002575" description="ATP synthase subunit a, chloroplastic">
    <location>
        <begin position="1"/>
        <end position="248"/>
    </location>
</feature>
<feature type="transmembrane region" description="Helical" evidence="1">
    <location>
        <begin position="96"/>
        <end position="116"/>
    </location>
</feature>
<feature type="transmembrane region" description="Helical" evidence="1">
    <location>
        <begin position="135"/>
        <end position="155"/>
    </location>
</feature>
<feature type="transmembrane region" description="Helical" evidence="1">
    <location>
        <begin position="200"/>
        <end position="220"/>
    </location>
</feature>
<feature type="transmembrane region" description="Helical" evidence="1">
    <location>
        <begin position="221"/>
        <end position="241"/>
    </location>
</feature>
<sequence length="248" mass="27566">MQIEQLQINEIDNLHQVSSVEVGQHLYWQIGNFQVHAQVLITSWVVVAILVALPATTTGNLQSIPTGTQNFIEYVLEFIRDLTRTQMGEEGYRPWVPFIGTMFLFIFASNWSGALLPWRVIQLPHGELAAPTNDINTTVALALLTSVAYFYAGLYKRGFSYFGKYIQPTPILLPINILEDFTKPLSLSFRLFGNILADELVVAVLVSLVPLIVPVPMMLLGLFTSGIQALIFATLAAAYIGESMEGHH</sequence>
<name>ATPI_ADICA</name>
<keyword id="KW-0066">ATP synthesis</keyword>
<keyword id="KW-0138">CF(0)</keyword>
<keyword id="KW-0150">Chloroplast</keyword>
<keyword id="KW-0375">Hydrogen ion transport</keyword>
<keyword id="KW-0406">Ion transport</keyword>
<keyword id="KW-0472">Membrane</keyword>
<keyword id="KW-0934">Plastid</keyword>
<keyword id="KW-0691">RNA editing</keyword>
<keyword id="KW-0793">Thylakoid</keyword>
<keyword id="KW-0812">Transmembrane</keyword>
<keyword id="KW-1133">Transmembrane helix</keyword>
<keyword id="KW-0813">Transport</keyword>
<gene>
    <name evidence="1" type="primary">atpI</name>
</gene>